<keyword id="KW-0028">Amino-acid biosynthesis</keyword>
<keyword id="KW-0170">Cobalt</keyword>
<keyword id="KW-0220">Diaminopimelate biosynthesis</keyword>
<keyword id="KW-0378">Hydrolase</keyword>
<keyword id="KW-0457">Lysine biosynthesis</keyword>
<keyword id="KW-0479">Metal-binding</keyword>
<keyword id="KW-0862">Zinc</keyword>
<comment type="function">
    <text evidence="1">Catalyzes the hydrolysis of N-succinyl-L,L-diaminopimelic acid (SDAP), forming succinate and LL-2,6-diaminopimelate (DAP), an intermediate involved in the bacterial biosynthesis of lysine and meso-diaminopimelic acid, an essential component of bacterial cell walls.</text>
</comment>
<comment type="catalytic activity">
    <reaction evidence="1">
        <text>N-succinyl-(2S,6S)-2,6-diaminopimelate + H2O = (2S,6S)-2,6-diaminopimelate + succinate</text>
        <dbReference type="Rhea" id="RHEA:22608"/>
        <dbReference type="ChEBI" id="CHEBI:15377"/>
        <dbReference type="ChEBI" id="CHEBI:30031"/>
        <dbReference type="ChEBI" id="CHEBI:57609"/>
        <dbReference type="ChEBI" id="CHEBI:58087"/>
        <dbReference type="EC" id="3.5.1.18"/>
    </reaction>
</comment>
<comment type="cofactor">
    <cofactor evidence="1">
        <name>Zn(2+)</name>
        <dbReference type="ChEBI" id="CHEBI:29105"/>
    </cofactor>
    <cofactor evidence="1">
        <name>Co(2+)</name>
        <dbReference type="ChEBI" id="CHEBI:48828"/>
    </cofactor>
    <text evidence="1">Binds 2 Zn(2+) or Co(2+) ions per subunit.</text>
</comment>
<comment type="pathway">
    <text evidence="1">Amino-acid biosynthesis; L-lysine biosynthesis via DAP pathway; LL-2,6-diaminopimelate from (S)-tetrahydrodipicolinate (succinylase route): step 3/3.</text>
</comment>
<comment type="subunit">
    <text evidence="1">Homodimer.</text>
</comment>
<comment type="similarity">
    <text evidence="1">Belongs to the peptidase M20A family. DapE subfamily.</text>
</comment>
<feature type="chain" id="PRO_0000375536" description="Succinyl-diaminopimelate desuccinylase">
    <location>
        <begin position="1"/>
        <end position="374"/>
    </location>
</feature>
<feature type="active site" evidence="1">
    <location>
        <position position="68"/>
    </location>
</feature>
<feature type="active site" description="Proton acceptor" evidence="1">
    <location>
        <position position="133"/>
    </location>
</feature>
<feature type="binding site" evidence="1">
    <location>
        <position position="66"/>
    </location>
    <ligand>
        <name>Zn(2+)</name>
        <dbReference type="ChEBI" id="CHEBI:29105"/>
        <label>1</label>
    </ligand>
</feature>
<feature type="binding site" evidence="1">
    <location>
        <position position="99"/>
    </location>
    <ligand>
        <name>Zn(2+)</name>
        <dbReference type="ChEBI" id="CHEBI:29105"/>
        <label>1</label>
    </ligand>
</feature>
<feature type="binding site" evidence="1">
    <location>
        <position position="99"/>
    </location>
    <ligand>
        <name>Zn(2+)</name>
        <dbReference type="ChEBI" id="CHEBI:29105"/>
        <label>2</label>
    </ligand>
</feature>
<feature type="binding site" evidence="1">
    <location>
        <position position="134"/>
    </location>
    <ligand>
        <name>Zn(2+)</name>
        <dbReference type="ChEBI" id="CHEBI:29105"/>
        <label>2</label>
    </ligand>
</feature>
<feature type="binding site" evidence="1">
    <location>
        <position position="162"/>
    </location>
    <ligand>
        <name>Zn(2+)</name>
        <dbReference type="ChEBI" id="CHEBI:29105"/>
        <label>1</label>
    </ligand>
</feature>
<feature type="binding site" evidence="1">
    <location>
        <position position="348"/>
    </location>
    <ligand>
        <name>Zn(2+)</name>
        <dbReference type="ChEBI" id="CHEBI:29105"/>
        <label>2</label>
    </ligand>
</feature>
<evidence type="ECO:0000255" key="1">
    <source>
        <dbReference type="HAMAP-Rule" id="MF_01690"/>
    </source>
</evidence>
<sequence>MSETLNLLKQLIERPSITPNDAGCQTILIDRLKSVGFQCEHLPFGEVHNFWAWHGHQSPFIIFAGHTDVVPPGDETQWHSPPFTPTEKNGYIYGRGAADMKSGLAAMVVAAENFVKQNPDHNGTIGFIVTSDEEGPAENGTQKVVDYLQQKNIKLDYCIVGEASSNEKLGDAIKIGRRGSMHGELTIIGKQGHIAYPHLADNPIHRSFQAFEALAKTKWDEGNEHFTPTSFQFYNVEAGAGAANVIPATLKAKFNFRFAPIHTTQQLQQKVERILNYYQLNYDIQWNVSSQPFFSGNGRLATFVRQAIQEICHLNTEPNTYGGTSDGRFIATTGCEVIELGPVNKTAHHVNENICIADLEKLTDIYFRTLQLLT</sequence>
<organism>
    <name type="scientific">Coxiella burnetii (strain CbuK_Q154)</name>
    <name type="common">Coxiella burnetii (strain Q154)</name>
    <dbReference type="NCBI Taxonomy" id="434924"/>
    <lineage>
        <taxon>Bacteria</taxon>
        <taxon>Pseudomonadati</taxon>
        <taxon>Pseudomonadota</taxon>
        <taxon>Gammaproteobacteria</taxon>
        <taxon>Legionellales</taxon>
        <taxon>Coxiellaceae</taxon>
        <taxon>Coxiella</taxon>
    </lineage>
</organism>
<protein>
    <recommendedName>
        <fullName evidence="1">Succinyl-diaminopimelate desuccinylase</fullName>
        <shortName evidence="1">SDAP desuccinylase</shortName>
        <ecNumber evidence="1">3.5.1.18</ecNumber>
    </recommendedName>
    <alternativeName>
        <fullName evidence="1">N-succinyl-LL-2,6-diaminoheptanedioate amidohydrolase</fullName>
    </alternativeName>
</protein>
<dbReference type="EC" id="3.5.1.18" evidence="1"/>
<dbReference type="EMBL" id="CP001020">
    <property type="protein sequence ID" value="ACJ20745.1"/>
    <property type="molecule type" value="Genomic_DNA"/>
</dbReference>
<dbReference type="RefSeq" id="WP_005771873.1">
    <property type="nucleotide sequence ID" value="NC_011528.1"/>
</dbReference>
<dbReference type="SMR" id="B6J929"/>
<dbReference type="KEGG" id="cbc:CbuK_1592"/>
<dbReference type="HOGENOM" id="CLU_021802_4_0_6"/>
<dbReference type="UniPathway" id="UPA00034">
    <property type="reaction ID" value="UER00021"/>
</dbReference>
<dbReference type="GO" id="GO:0008777">
    <property type="term" value="F:acetylornithine deacetylase activity"/>
    <property type="evidence" value="ECO:0007669"/>
    <property type="project" value="TreeGrafter"/>
</dbReference>
<dbReference type="GO" id="GO:0050897">
    <property type="term" value="F:cobalt ion binding"/>
    <property type="evidence" value="ECO:0007669"/>
    <property type="project" value="UniProtKB-UniRule"/>
</dbReference>
<dbReference type="GO" id="GO:0009014">
    <property type="term" value="F:succinyl-diaminopimelate desuccinylase activity"/>
    <property type="evidence" value="ECO:0007669"/>
    <property type="project" value="UniProtKB-UniRule"/>
</dbReference>
<dbReference type="GO" id="GO:0008270">
    <property type="term" value="F:zinc ion binding"/>
    <property type="evidence" value="ECO:0007669"/>
    <property type="project" value="UniProtKB-UniRule"/>
</dbReference>
<dbReference type="GO" id="GO:0019877">
    <property type="term" value="P:diaminopimelate biosynthetic process"/>
    <property type="evidence" value="ECO:0007669"/>
    <property type="project" value="UniProtKB-UniRule"/>
</dbReference>
<dbReference type="GO" id="GO:0006526">
    <property type="term" value="P:L-arginine biosynthetic process"/>
    <property type="evidence" value="ECO:0007669"/>
    <property type="project" value="TreeGrafter"/>
</dbReference>
<dbReference type="GO" id="GO:0009089">
    <property type="term" value="P:lysine biosynthetic process via diaminopimelate"/>
    <property type="evidence" value="ECO:0007669"/>
    <property type="project" value="UniProtKB-UniRule"/>
</dbReference>
<dbReference type="CDD" id="cd03891">
    <property type="entry name" value="M20_DapE_proteobac"/>
    <property type="match status" value="1"/>
</dbReference>
<dbReference type="FunFam" id="3.30.70.360:FF:000011">
    <property type="entry name" value="Succinyl-diaminopimelate desuccinylase"/>
    <property type="match status" value="1"/>
</dbReference>
<dbReference type="FunFam" id="3.40.630.10:FF:000005">
    <property type="entry name" value="Succinyl-diaminopimelate desuccinylase"/>
    <property type="match status" value="1"/>
</dbReference>
<dbReference type="Gene3D" id="3.30.70.360">
    <property type="match status" value="1"/>
</dbReference>
<dbReference type="Gene3D" id="3.40.630.10">
    <property type="entry name" value="Zn peptidases"/>
    <property type="match status" value="1"/>
</dbReference>
<dbReference type="HAMAP" id="MF_01690">
    <property type="entry name" value="DapE"/>
    <property type="match status" value="1"/>
</dbReference>
<dbReference type="InterPro" id="IPR001261">
    <property type="entry name" value="ArgE/DapE_CS"/>
</dbReference>
<dbReference type="InterPro" id="IPR036264">
    <property type="entry name" value="Bact_exopeptidase_dim_dom"/>
</dbReference>
<dbReference type="InterPro" id="IPR005941">
    <property type="entry name" value="DapE_proteobac"/>
</dbReference>
<dbReference type="InterPro" id="IPR002933">
    <property type="entry name" value="Peptidase_M20"/>
</dbReference>
<dbReference type="InterPro" id="IPR011650">
    <property type="entry name" value="Peptidase_M20_dimer"/>
</dbReference>
<dbReference type="InterPro" id="IPR050072">
    <property type="entry name" value="Peptidase_M20A"/>
</dbReference>
<dbReference type="NCBIfam" id="TIGR01246">
    <property type="entry name" value="dapE_proteo"/>
    <property type="match status" value="1"/>
</dbReference>
<dbReference type="NCBIfam" id="NF009557">
    <property type="entry name" value="PRK13009.1"/>
    <property type="match status" value="1"/>
</dbReference>
<dbReference type="PANTHER" id="PTHR43808">
    <property type="entry name" value="ACETYLORNITHINE DEACETYLASE"/>
    <property type="match status" value="1"/>
</dbReference>
<dbReference type="PANTHER" id="PTHR43808:SF31">
    <property type="entry name" value="N-ACETYL-L-CITRULLINE DEACETYLASE"/>
    <property type="match status" value="1"/>
</dbReference>
<dbReference type="Pfam" id="PF07687">
    <property type="entry name" value="M20_dimer"/>
    <property type="match status" value="1"/>
</dbReference>
<dbReference type="Pfam" id="PF01546">
    <property type="entry name" value="Peptidase_M20"/>
    <property type="match status" value="1"/>
</dbReference>
<dbReference type="SUPFAM" id="SSF55031">
    <property type="entry name" value="Bacterial exopeptidase dimerisation domain"/>
    <property type="match status" value="1"/>
</dbReference>
<dbReference type="SUPFAM" id="SSF53187">
    <property type="entry name" value="Zn-dependent exopeptidases"/>
    <property type="match status" value="1"/>
</dbReference>
<dbReference type="PROSITE" id="PS00759">
    <property type="entry name" value="ARGE_DAPE_CPG2_2"/>
    <property type="match status" value="1"/>
</dbReference>
<name>DAPE_COXB1</name>
<proteinExistence type="inferred from homology"/>
<reference key="1">
    <citation type="journal article" date="2009" name="Infect. Immun.">
        <title>Comparative genomics reveal extensive transposon-mediated genomic plasticity and diversity among potential effector proteins within the genus Coxiella.</title>
        <authorList>
            <person name="Beare P.A."/>
            <person name="Unsworth N."/>
            <person name="Andoh M."/>
            <person name="Voth D.E."/>
            <person name="Omsland A."/>
            <person name="Gilk S.D."/>
            <person name="Williams K.P."/>
            <person name="Sobral B.W."/>
            <person name="Kupko J.J. III"/>
            <person name="Porcella S.F."/>
            <person name="Samuel J.E."/>
            <person name="Heinzen R.A."/>
        </authorList>
    </citation>
    <scope>NUCLEOTIDE SEQUENCE [LARGE SCALE GENOMIC DNA]</scope>
    <source>
        <strain>CbuK_Q154</strain>
    </source>
</reference>
<gene>
    <name evidence="1" type="primary">dapE</name>
    <name type="ordered locus">CbuK_1592</name>
</gene>
<accession>B6J929</accession>